<feature type="chain" id="PRO_0000399856" description="Altered inheritance of mitochondria protein 4">
    <location>
        <begin position="1"/>
        <end position="102"/>
    </location>
</feature>
<feature type="region of interest" description="Disordered" evidence="2">
    <location>
        <begin position="1"/>
        <end position="38"/>
    </location>
</feature>
<accession>A7TGL9</accession>
<proteinExistence type="inferred from homology"/>
<dbReference type="EMBL" id="DS480387">
    <property type="protein sequence ID" value="EDO18626.1"/>
    <property type="molecule type" value="Genomic_DNA"/>
</dbReference>
<dbReference type="RefSeq" id="XP_001646484.1">
    <property type="nucleotide sequence ID" value="XM_001646434.1"/>
</dbReference>
<dbReference type="GeneID" id="5546926"/>
<dbReference type="KEGG" id="vpo:Kpol_1048p57"/>
<dbReference type="HOGENOM" id="CLU_2279565_0_0_1"/>
<dbReference type="InParanoid" id="A7TGL9"/>
<dbReference type="OrthoDB" id="4041945at2759"/>
<dbReference type="PhylomeDB" id="A7TGL9"/>
<dbReference type="Proteomes" id="UP000000267">
    <property type="component" value="Unassembled WGS sequence"/>
</dbReference>
<dbReference type="GO" id="GO:0005737">
    <property type="term" value="C:cytoplasm"/>
    <property type="evidence" value="ECO:0007669"/>
    <property type="project" value="UniProtKB-SubCell"/>
</dbReference>
<dbReference type="Pfam" id="PF12622">
    <property type="entry name" value="NpwBP"/>
    <property type="match status" value="1"/>
</dbReference>
<keyword id="KW-0963">Cytoplasm</keyword>
<keyword id="KW-1185">Reference proteome</keyword>
<evidence type="ECO:0000250" key="1"/>
<evidence type="ECO:0000256" key="2">
    <source>
        <dbReference type="SAM" id="MobiDB-lite"/>
    </source>
</evidence>
<evidence type="ECO:0000305" key="3"/>
<organism>
    <name type="scientific">Vanderwaltozyma polyspora (strain ATCC 22028 / DSM 70294 / BCRC 21397 / CBS 2163 / NBRC 10782 / NRRL Y-8283 / UCD 57-17)</name>
    <name type="common">Kluyveromyces polysporus</name>
    <dbReference type="NCBI Taxonomy" id="436907"/>
    <lineage>
        <taxon>Eukaryota</taxon>
        <taxon>Fungi</taxon>
        <taxon>Dikarya</taxon>
        <taxon>Ascomycota</taxon>
        <taxon>Saccharomycotina</taxon>
        <taxon>Saccharomycetes</taxon>
        <taxon>Saccharomycetales</taxon>
        <taxon>Saccharomycetaceae</taxon>
        <taxon>Vanderwaltozyma</taxon>
    </lineage>
</organism>
<name>AIM4_VANPO</name>
<comment type="subcellular location">
    <subcellularLocation>
        <location evidence="1">Cytoplasm</location>
    </subcellularLocation>
</comment>
<comment type="similarity">
    <text evidence="3">Belongs to the AIM4 family.</text>
</comment>
<sequence length="102" mass="12055">MNYINMKKIDEENKANSGDDTTESRKKQKTKNNEEHEIRSDELFRKSIFFDSHWNPNGVAPPNHRNVFYNPKTFVHRGKPIIAKLMDLDEEHLTKLISKTQK</sequence>
<gene>
    <name type="primary">AIM4</name>
    <name type="ORF">Kpol_1048p57</name>
</gene>
<protein>
    <recommendedName>
        <fullName>Altered inheritance of mitochondria protein 4</fullName>
    </recommendedName>
</protein>
<reference key="1">
    <citation type="journal article" date="2007" name="Proc. Natl. Acad. Sci. U.S.A.">
        <title>Independent sorting-out of thousands of duplicated gene pairs in two yeast species descended from a whole-genome duplication.</title>
        <authorList>
            <person name="Scannell D.R."/>
            <person name="Frank A.C."/>
            <person name="Conant G.C."/>
            <person name="Byrne K.P."/>
            <person name="Woolfit M."/>
            <person name="Wolfe K.H."/>
        </authorList>
    </citation>
    <scope>NUCLEOTIDE SEQUENCE [LARGE SCALE GENOMIC DNA]</scope>
    <source>
        <strain>ATCC 22028 / DSM 70294 / BCRC 21397 / CBS 2163 / NBRC 10782 / NRRL Y-8283 / UCD 57-17</strain>
    </source>
</reference>